<name>HIS3_BIFAA</name>
<evidence type="ECO:0000255" key="1">
    <source>
        <dbReference type="HAMAP-Rule" id="MF_01021"/>
    </source>
</evidence>
<feature type="chain" id="PRO_1000063389" description="Phosphoribosyl-AMP cyclohydrolase">
    <location>
        <begin position="1"/>
        <end position="135"/>
    </location>
</feature>
<feature type="binding site" evidence="1">
    <location>
        <position position="89"/>
    </location>
    <ligand>
        <name>Mg(2+)</name>
        <dbReference type="ChEBI" id="CHEBI:18420"/>
    </ligand>
</feature>
<feature type="binding site" evidence="1">
    <location>
        <position position="90"/>
    </location>
    <ligand>
        <name>Zn(2+)</name>
        <dbReference type="ChEBI" id="CHEBI:29105"/>
        <note>ligand shared between dimeric partners</note>
    </ligand>
</feature>
<feature type="binding site" evidence="1">
    <location>
        <position position="91"/>
    </location>
    <ligand>
        <name>Mg(2+)</name>
        <dbReference type="ChEBI" id="CHEBI:18420"/>
    </ligand>
</feature>
<feature type="binding site" evidence="1">
    <location>
        <position position="93"/>
    </location>
    <ligand>
        <name>Mg(2+)</name>
        <dbReference type="ChEBI" id="CHEBI:18420"/>
    </ligand>
</feature>
<feature type="binding site" evidence="1">
    <location>
        <position position="106"/>
    </location>
    <ligand>
        <name>Zn(2+)</name>
        <dbReference type="ChEBI" id="CHEBI:29105"/>
        <note>ligand shared between dimeric partners</note>
    </ligand>
</feature>
<feature type="binding site" evidence="1">
    <location>
        <position position="113"/>
    </location>
    <ligand>
        <name>Zn(2+)</name>
        <dbReference type="ChEBI" id="CHEBI:29105"/>
        <note>ligand shared between dimeric partners</note>
    </ligand>
</feature>
<keyword id="KW-0028">Amino-acid biosynthesis</keyword>
<keyword id="KW-0963">Cytoplasm</keyword>
<keyword id="KW-0368">Histidine biosynthesis</keyword>
<keyword id="KW-0378">Hydrolase</keyword>
<keyword id="KW-0460">Magnesium</keyword>
<keyword id="KW-0479">Metal-binding</keyword>
<keyword id="KW-1185">Reference proteome</keyword>
<keyword id="KW-0862">Zinc</keyword>
<proteinExistence type="inferred from homology"/>
<reference key="1">
    <citation type="submission" date="2006-12" db="EMBL/GenBank/DDBJ databases">
        <title>Bifidobacterium adolescentis complete genome sequence.</title>
        <authorList>
            <person name="Suzuki T."/>
            <person name="Tsuda Y."/>
            <person name="Kanou N."/>
            <person name="Inoue T."/>
            <person name="Kumazaki K."/>
            <person name="Nagano S."/>
            <person name="Hirai S."/>
            <person name="Tanaka K."/>
            <person name="Watanabe K."/>
        </authorList>
    </citation>
    <scope>NUCLEOTIDE SEQUENCE [LARGE SCALE GENOMIC DNA]</scope>
    <source>
        <strain>ATCC 15703 / DSM 20083 / NCTC 11814 / E194a</strain>
    </source>
</reference>
<comment type="function">
    <text evidence="1">Catalyzes the hydrolysis of the adenine ring of phosphoribosyl-AMP.</text>
</comment>
<comment type="catalytic activity">
    <reaction evidence="1">
        <text>1-(5-phospho-beta-D-ribosyl)-5'-AMP + H2O = 1-(5-phospho-beta-D-ribosyl)-5-[(5-phospho-beta-D-ribosylamino)methylideneamino]imidazole-4-carboxamide</text>
        <dbReference type="Rhea" id="RHEA:20049"/>
        <dbReference type="ChEBI" id="CHEBI:15377"/>
        <dbReference type="ChEBI" id="CHEBI:58435"/>
        <dbReference type="ChEBI" id="CHEBI:59457"/>
        <dbReference type="EC" id="3.5.4.19"/>
    </reaction>
</comment>
<comment type="cofactor">
    <cofactor evidence="1">
        <name>Mg(2+)</name>
        <dbReference type="ChEBI" id="CHEBI:18420"/>
    </cofactor>
    <text evidence="1">Binds 1 Mg(2+) ion per subunit.</text>
</comment>
<comment type="cofactor">
    <cofactor evidence="1">
        <name>Zn(2+)</name>
        <dbReference type="ChEBI" id="CHEBI:29105"/>
    </cofactor>
    <text evidence="1">Binds 1 zinc ion per subunit.</text>
</comment>
<comment type="pathway">
    <text evidence="1">Amino-acid biosynthesis; L-histidine biosynthesis; L-histidine from 5-phospho-alpha-D-ribose 1-diphosphate: step 3/9.</text>
</comment>
<comment type="subunit">
    <text evidence="1">Homodimer.</text>
</comment>
<comment type="subcellular location">
    <subcellularLocation>
        <location evidence="1">Cytoplasm</location>
    </subcellularLocation>
</comment>
<comment type="similarity">
    <text evidence="1">Belongs to the PRA-CH family.</text>
</comment>
<gene>
    <name evidence="1" type="primary">hisI</name>
    <name type="ordered locus">BAD_0788</name>
</gene>
<accession>A1A1I6</accession>
<organism>
    <name type="scientific">Bifidobacterium adolescentis (strain ATCC 15703 / DSM 20083 / NCTC 11814 / E194a)</name>
    <dbReference type="NCBI Taxonomy" id="367928"/>
    <lineage>
        <taxon>Bacteria</taxon>
        <taxon>Bacillati</taxon>
        <taxon>Actinomycetota</taxon>
        <taxon>Actinomycetes</taxon>
        <taxon>Bifidobacteriales</taxon>
        <taxon>Bifidobacteriaceae</taxon>
        <taxon>Bifidobacterium</taxon>
    </lineage>
</organism>
<sequence length="135" mass="15208">MTNEAYDNTTTLDPRIAQRLKHDDKGLVAAVIQQFDTKEVLMVGYMNDEAIRRTLTTGRVTFWSRSRQEYWRKGDTSGHAQYVKSFALDCDGDAILVEVDQVGAACHTGKRSCFEEGGQLPVVVGHRTKEQEGQR</sequence>
<dbReference type="EC" id="3.5.4.19" evidence="1"/>
<dbReference type="EMBL" id="AP009256">
    <property type="protein sequence ID" value="BAF39569.1"/>
    <property type="molecule type" value="Genomic_DNA"/>
</dbReference>
<dbReference type="RefSeq" id="WP_003809316.1">
    <property type="nucleotide sequence ID" value="NZ_CAXVNC010000004.1"/>
</dbReference>
<dbReference type="SMR" id="A1A1I6"/>
<dbReference type="STRING" id="367928.BAD_0788"/>
<dbReference type="PaxDb" id="1680-BADO_0837"/>
<dbReference type="GeneID" id="4556177"/>
<dbReference type="KEGG" id="bad:BAD_0788"/>
<dbReference type="HOGENOM" id="CLU_048577_5_1_11"/>
<dbReference type="UniPathway" id="UPA00031">
    <property type="reaction ID" value="UER00008"/>
</dbReference>
<dbReference type="Proteomes" id="UP000008702">
    <property type="component" value="Chromosome"/>
</dbReference>
<dbReference type="GO" id="GO:0005737">
    <property type="term" value="C:cytoplasm"/>
    <property type="evidence" value="ECO:0007669"/>
    <property type="project" value="UniProtKB-SubCell"/>
</dbReference>
<dbReference type="GO" id="GO:0000287">
    <property type="term" value="F:magnesium ion binding"/>
    <property type="evidence" value="ECO:0007669"/>
    <property type="project" value="UniProtKB-UniRule"/>
</dbReference>
<dbReference type="GO" id="GO:0004635">
    <property type="term" value="F:phosphoribosyl-AMP cyclohydrolase activity"/>
    <property type="evidence" value="ECO:0007669"/>
    <property type="project" value="UniProtKB-UniRule"/>
</dbReference>
<dbReference type="GO" id="GO:0008270">
    <property type="term" value="F:zinc ion binding"/>
    <property type="evidence" value="ECO:0007669"/>
    <property type="project" value="UniProtKB-UniRule"/>
</dbReference>
<dbReference type="GO" id="GO:0000105">
    <property type="term" value="P:L-histidine biosynthetic process"/>
    <property type="evidence" value="ECO:0007669"/>
    <property type="project" value="UniProtKB-UniRule"/>
</dbReference>
<dbReference type="FunFam" id="3.10.20.810:FF:000001">
    <property type="entry name" value="Histidine biosynthesis bifunctional protein HisIE"/>
    <property type="match status" value="1"/>
</dbReference>
<dbReference type="Gene3D" id="3.10.20.810">
    <property type="entry name" value="Phosphoribosyl-AMP cyclohydrolase"/>
    <property type="match status" value="1"/>
</dbReference>
<dbReference type="HAMAP" id="MF_01021">
    <property type="entry name" value="HisI"/>
    <property type="match status" value="1"/>
</dbReference>
<dbReference type="InterPro" id="IPR026660">
    <property type="entry name" value="PRA-CH"/>
</dbReference>
<dbReference type="InterPro" id="IPR002496">
    <property type="entry name" value="PRib_AMP_CycHydrolase_dom"/>
</dbReference>
<dbReference type="InterPro" id="IPR038019">
    <property type="entry name" value="PRib_AMP_CycHydrolase_sf"/>
</dbReference>
<dbReference type="NCBIfam" id="NF000768">
    <property type="entry name" value="PRK00051.1"/>
    <property type="match status" value="1"/>
</dbReference>
<dbReference type="PANTHER" id="PTHR42945">
    <property type="entry name" value="HISTIDINE BIOSYNTHESIS BIFUNCTIONAL PROTEIN"/>
    <property type="match status" value="1"/>
</dbReference>
<dbReference type="PANTHER" id="PTHR42945:SF11">
    <property type="entry name" value="PHOSPHORIBOSYL-AMP CYCLOHYDROLASE"/>
    <property type="match status" value="1"/>
</dbReference>
<dbReference type="Pfam" id="PF01502">
    <property type="entry name" value="PRA-CH"/>
    <property type="match status" value="1"/>
</dbReference>
<dbReference type="SUPFAM" id="SSF141734">
    <property type="entry name" value="HisI-like"/>
    <property type="match status" value="1"/>
</dbReference>
<protein>
    <recommendedName>
        <fullName evidence="1">Phosphoribosyl-AMP cyclohydrolase</fullName>
        <shortName evidence="1">PRA-CH</shortName>
        <ecNumber evidence="1">3.5.4.19</ecNumber>
    </recommendedName>
</protein>